<sequence>MADKMQALGAQLTQALQETDEFKALKAAFATMKEDDATYKLFKRFQQIQMDLQQKQMAGQQVTDDEMSRARDVADQVAKIEAVKTLMDAERGVNALLNQLNQTITQPIQDIYAG</sequence>
<organism>
    <name type="scientific">Levilactobacillus brevis (strain ATCC 367 / BCRC 12310 / CIP 105137 / JCM 1170 / LMG 11437 / NCIMB 947 / NCTC 947)</name>
    <name type="common">Lactobacillus brevis</name>
    <dbReference type="NCBI Taxonomy" id="387344"/>
    <lineage>
        <taxon>Bacteria</taxon>
        <taxon>Bacillati</taxon>
        <taxon>Bacillota</taxon>
        <taxon>Bacilli</taxon>
        <taxon>Lactobacillales</taxon>
        <taxon>Lactobacillaceae</taxon>
        <taxon>Levilactobacillus</taxon>
    </lineage>
</organism>
<gene>
    <name type="ordered locus">LVIS_1488</name>
</gene>
<protein>
    <recommendedName>
        <fullName evidence="1">UPF0342 protein LVIS_1488</fullName>
    </recommendedName>
</protein>
<dbReference type="EMBL" id="CP000416">
    <property type="protein sequence ID" value="ABJ64585.1"/>
    <property type="molecule type" value="Genomic_DNA"/>
</dbReference>
<dbReference type="RefSeq" id="WP_011668213.1">
    <property type="nucleotide sequence ID" value="NC_008497.1"/>
</dbReference>
<dbReference type="SMR" id="Q03QD7"/>
<dbReference type="STRING" id="387344.LVIS_1488"/>
<dbReference type="KEGG" id="lbr:LVIS_1488"/>
<dbReference type="PATRIC" id="fig|387344.15.peg.1423"/>
<dbReference type="eggNOG" id="COG3679">
    <property type="taxonomic scope" value="Bacteria"/>
</dbReference>
<dbReference type="HOGENOM" id="CLU_140243_3_1_9"/>
<dbReference type="Proteomes" id="UP000001652">
    <property type="component" value="Chromosome"/>
</dbReference>
<dbReference type="Gene3D" id="1.20.1500.10">
    <property type="entry name" value="YheA/YmcA-like"/>
    <property type="match status" value="1"/>
</dbReference>
<dbReference type="HAMAP" id="MF_01526">
    <property type="entry name" value="UPF0342"/>
    <property type="match status" value="1"/>
</dbReference>
<dbReference type="InterPro" id="IPR010368">
    <property type="entry name" value="Com_YlbF"/>
</dbReference>
<dbReference type="InterPro" id="IPR023378">
    <property type="entry name" value="YheA/YmcA-like_dom_sf"/>
</dbReference>
<dbReference type="Pfam" id="PF06133">
    <property type="entry name" value="Com_YlbF"/>
    <property type="match status" value="1"/>
</dbReference>
<dbReference type="SUPFAM" id="SSF158622">
    <property type="entry name" value="YheA/YmcA-like"/>
    <property type="match status" value="1"/>
</dbReference>
<evidence type="ECO:0000255" key="1">
    <source>
        <dbReference type="HAMAP-Rule" id="MF_01526"/>
    </source>
</evidence>
<accession>Q03QD7</accession>
<comment type="similarity">
    <text evidence="1">Belongs to the UPF0342 family.</text>
</comment>
<name>Y1488_LEVBA</name>
<reference key="1">
    <citation type="journal article" date="2006" name="Proc. Natl. Acad. Sci. U.S.A.">
        <title>Comparative genomics of the lactic acid bacteria.</title>
        <authorList>
            <person name="Makarova K.S."/>
            <person name="Slesarev A."/>
            <person name="Wolf Y.I."/>
            <person name="Sorokin A."/>
            <person name="Mirkin B."/>
            <person name="Koonin E.V."/>
            <person name="Pavlov A."/>
            <person name="Pavlova N."/>
            <person name="Karamychev V."/>
            <person name="Polouchine N."/>
            <person name="Shakhova V."/>
            <person name="Grigoriev I."/>
            <person name="Lou Y."/>
            <person name="Rohksar D."/>
            <person name="Lucas S."/>
            <person name="Huang K."/>
            <person name="Goodstein D.M."/>
            <person name="Hawkins T."/>
            <person name="Plengvidhya V."/>
            <person name="Welker D."/>
            <person name="Hughes J."/>
            <person name="Goh Y."/>
            <person name="Benson A."/>
            <person name="Baldwin K."/>
            <person name="Lee J.-H."/>
            <person name="Diaz-Muniz I."/>
            <person name="Dosti B."/>
            <person name="Smeianov V."/>
            <person name="Wechter W."/>
            <person name="Barabote R."/>
            <person name="Lorca G."/>
            <person name="Altermann E."/>
            <person name="Barrangou R."/>
            <person name="Ganesan B."/>
            <person name="Xie Y."/>
            <person name="Rawsthorne H."/>
            <person name="Tamir D."/>
            <person name="Parker C."/>
            <person name="Breidt F."/>
            <person name="Broadbent J.R."/>
            <person name="Hutkins R."/>
            <person name="O'Sullivan D."/>
            <person name="Steele J."/>
            <person name="Unlu G."/>
            <person name="Saier M.H. Jr."/>
            <person name="Klaenhammer T."/>
            <person name="Richardson P."/>
            <person name="Kozyavkin S."/>
            <person name="Weimer B.C."/>
            <person name="Mills D.A."/>
        </authorList>
    </citation>
    <scope>NUCLEOTIDE SEQUENCE [LARGE SCALE GENOMIC DNA]</scope>
    <source>
        <strain>ATCC 367 / BCRC 12310 / CIP 105137 / JCM 1170 / LMG 11437 / NCIMB 947 / NCTC 947</strain>
    </source>
</reference>
<keyword id="KW-1185">Reference proteome</keyword>
<feature type="chain" id="PRO_0000292730" description="UPF0342 protein LVIS_1488">
    <location>
        <begin position="1"/>
        <end position="114"/>
    </location>
</feature>
<proteinExistence type="inferred from homology"/>